<organism>
    <name type="scientific">Homo sapiens</name>
    <name type="common">Human</name>
    <dbReference type="NCBI Taxonomy" id="9606"/>
    <lineage>
        <taxon>Eukaryota</taxon>
        <taxon>Metazoa</taxon>
        <taxon>Chordata</taxon>
        <taxon>Craniata</taxon>
        <taxon>Vertebrata</taxon>
        <taxon>Euteleostomi</taxon>
        <taxon>Mammalia</taxon>
        <taxon>Eutheria</taxon>
        <taxon>Euarchontoglires</taxon>
        <taxon>Primates</taxon>
        <taxon>Haplorrhini</taxon>
        <taxon>Catarrhini</taxon>
        <taxon>Hominidae</taxon>
        <taxon>Homo</taxon>
    </lineage>
</organism>
<name>PEX7_HUMAN</name>
<feature type="chain" id="PRO_0000051116" description="Peroxisomal targeting signal 2 receptor">
    <location>
        <begin position="1"/>
        <end position="323"/>
    </location>
</feature>
<feature type="repeat" description="WD 1">
    <location>
        <begin position="65"/>
        <end position="96"/>
    </location>
</feature>
<feature type="repeat" description="WD 2">
    <location>
        <begin position="109"/>
        <end position="141"/>
    </location>
</feature>
<feature type="repeat" description="WD 3">
    <location>
        <begin position="153"/>
        <end position="184"/>
    </location>
</feature>
<feature type="repeat" description="WD 4">
    <location>
        <begin position="196"/>
        <end position="227"/>
    </location>
</feature>
<feature type="repeat" description="WD 5">
    <location>
        <begin position="240"/>
        <end position="271"/>
    </location>
</feature>
<feature type="repeat" description="WD 6">
    <location>
        <begin position="284"/>
        <end position="315"/>
    </location>
</feature>
<feature type="splice variant" id="VSP_056393" description="In isoform 2." evidence="10">
    <original>FSPFHASVLASCSYDFTVRFWNFSKPDSLLETVEHHTEFTCGLDFSLQSPTQVADCSWDETIKIYDPACLTIPA</original>
    <variation>MESCPVTQTRSQLTATSAFWVQAVLLPQPTE</variation>
    <location>
        <begin position="250"/>
        <end position="323"/>
    </location>
</feature>
<feature type="sequence variant" id="VAR_016810" description="In PBD9B; dbSNP:rs61753233." evidence="3">
    <original>T</original>
    <variation>P</variation>
    <location>
        <position position="14"/>
    </location>
</feature>
<feature type="sequence variant" id="VAR_007725" description="In RCDP1; uncertain significance; dbSNP:rs121909152." evidence="8">
    <original>G</original>
    <variation>R</variation>
    <location>
        <position position="217"/>
    </location>
</feature>
<feature type="sequence variant" id="VAR_007726" description="In RCDP1; dbSNP:rs121909151." evidence="8">
    <original>A</original>
    <variation>V</variation>
    <location>
        <position position="218"/>
    </location>
</feature>
<feature type="mutagenesis site" description="Impaired binding to cargo proteins containing a PTS2 peroxisomal targeting signal." evidence="4 5">
    <original>E</original>
    <variation>R</variation>
    <location>
        <position position="113"/>
    </location>
</feature>
<feature type="mutagenesis site" description="Impaired binding to cargo proteins containing a PTS2 peroxisomal targeting signal." evidence="4 5">
    <original>E</original>
    <variation>R</variation>
    <location>
        <position position="200"/>
    </location>
</feature>
<feature type="mutagenesis site" description="Impaired interaction with PEX5, leading to decreased peroxisomal import of proteins containing a PTS2 peroxisomal targeting signal." evidence="4 5">
    <original>E</original>
    <variation>R</variation>
    <location>
        <position position="287"/>
    </location>
</feature>
<accession>O00628</accession>
<accession>C0H5X6</accession>
<sequence>MSAVCGGAARMLRTPGRHGYAAEFSPYLPGRLACATAQHYGIAGCGTLLILDPDEAGLRLFRSFDWNDGLFDVTWSENNEHVLITCSGDGSLQLWDTAKAAGPLQVYKEHAQEVYSVDWSQTRGEQLVVSGSWDQTVKLWDPTVGKSLCTFRGHESIIYSTIWSPHIPGCFASASGDQTLRIWDVKAAGVRIVIPAHQAEILSCDWCKYNENLLVTGAVDCSLRGWDLRNVRQPVFELLGHTYAIRRVKFSPFHASVLASCSYDFTVRFWNFSKPDSLLETVEHHTEFTCGLDFSLQSPTQVADCSWDETIKIYDPACLTIPA</sequence>
<reference key="1">
    <citation type="journal article" date="1997" name="Nat. Genet.">
        <title>Rhizomelic chondrodysplasia punctata is caused by deficiency of human PEX7, a homologue of the yeast PTS2 receptor.</title>
        <authorList>
            <person name="Purdue P.E."/>
            <person name="Zhang J.W."/>
            <person name="Skoneczny M."/>
            <person name="Lazarow P.B."/>
        </authorList>
    </citation>
    <scope>NUCLEOTIDE SEQUENCE [MRNA] (ISOFORM 1)</scope>
    <scope>INVOLVEMENT IN RCDP1</scope>
</reference>
<reference key="2">
    <citation type="journal article" date="1997" name="Nat. Genet.">
        <title>Human PEX7 encodes the peroxisomal PTS2 receptor and is responsible for rhizomelic chondrodysplasia punctata.</title>
        <authorList>
            <person name="Braverman N."/>
            <person name="Steel G."/>
            <person name="Obie C."/>
            <person name="Moser A."/>
            <person name="Moser H."/>
            <person name="Gould S.J."/>
            <person name="Valle D."/>
        </authorList>
    </citation>
    <scope>NUCLEOTIDE SEQUENCE [MRNA] (ISOFORM 1)</scope>
    <scope>FUNCTION</scope>
    <scope>TISSUE SPECIFICITY</scope>
    <scope>VARIANTS RCDP1 ARG-217 AND VAL-218</scope>
    <source>
        <tissue>Retina</tissue>
    </source>
</reference>
<reference key="3">
    <citation type="journal article" date="2000" name="Genomics">
        <title>PEX7 gene structure, alternative transcripts, and evidence for a founder haplotype for the frequent RCDP allele, L292ter.</title>
        <authorList>
            <person name="Braverman N."/>
            <person name="Steel G."/>
            <person name="Lin P."/>
            <person name="Moser A."/>
            <person name="Moser H."/>
            <person name="Valle D."/>
        </authorList>
    </citation>
    <scope>NUCLEOTIDE SEQUENCE [GENOMIC DNA]</scope>
</reference>
<reference key="4">
    <citation type="journal article" date="2003" name="Nature">
        <title>The DNA sequence and analysis of human chromosome 6.</title>
        <authorList>
            <person name="Mungall A.J."/>
            <person name="Palmer S.A."/>
            <person name="Sims S.K."/>
            <person name="Edwards C.A."/>
            <person name="Ashurst J.L."/>
            <person name="Wilming L."/>
            <person name="Jones M.C."/>
            <person name="Horton R."/>
            <person name="Hunt S.E."/>
            <person name="Scott C.E."/>
            <person name="Gilbert J.G.R."/>
            <person name="Clamp M.E."/>
            <person name="Bethel G."/>
            <person name="Milne S."/>
            <person name="Ainscough R."/>
            <person name="Almeida J.P."/>
            <person name="Ambrose K.D."/>
            <person name="Andrews T.D."/>
            <person name="Ashwell R.I.S."/>
            <person name="Babbage A.K."/>
            <person name="Bagguley C.L."/>
            <person name="Bailey J."/>
            <person name="Banerjee R."/>
            <person name="Barker D.J."/>
            <person name="Barlow K.F."/>
            <person name="Bates K."/>
            <person name="Beare D.M."/>
            <person name="Beasley H."/>
            <person name="Beasley O."/>
            <person name="Bird C.P."/>
            <person name="Blakey S.E."/>
            <person name="Bray-Allen S."/>
            <person name="Brook J."/>
            <person name="Brown A.J."/>
            <person name="Brown J.Y."/>
            <person name="Burford D.C."/>
            <person name="Burrill W."/>
            <person name="Burton J."/>
            <person name="Carder C."/>
            <person name="Carter N.P."/>
            <person name="Chapman J.C."/>
            <person name="Clark S.Y."/>
            <person name="Clark G."/>
            <person name="Clee C.M."/>
            <person name="Clegg S."/>
            <person name="Cobley V."/>
            <person name="Collier R.E."/>
            <person name="Collins J.E."/>
            <person name="Colman L.K."/>
            <person name="Corby N.R."/>
            <person name="Coville G.J."/>
            <person name="Culley K.M."/>
            <person name="Dhami P."/>
            <person name="Davies J."/>
            <person name="Dunn M."/>
            <person name="Earthrowl M.E."/>
            <person name="Ellington A.E."/>
            <person name="Evans K.A."/>
            <person name="Faulkner L."/>
            <person name="Francis M.D."/>
            <person name="Frankish A."/>
            <person name="Frankland J."/>
            <person name="French L."/>
            <person name="Garner P."/>
            <person name="Garnett J."/>
            <person name="Ghori M.J."/>
            <person name="Gilby L.M."/>
            <person name="Gillson C.J."/>
            <person name="Glithero R.J."/>
            <person name="Grafham D.V."/>
            <person name="Grant M."/>
            <person name="Gribble S."/>
            <person name="Griffiths C."/>
            <person name="Griffiths M.N.D."/>
            <person name="Hall R."/>
            <person name="Halls K.S."/>
            <person name="Hammond S."/>
            <person name="Harley J.L."/>
            <person name="Hart E.A."/>
            <person name="Heath P.D."/>
            <person name="Heathcott R."/>
            <person name="Holmes S.J."/>
            <person name="Howden P.J."/>
            <person name="Howe K.L."/>
            <person name="Howell G.R."/>
            <person name="Huckle E."/>
            <person name="Humphray S.J."/>
            <person name="Humphries M.D."/>
            <person name="Hunt A.R."/>
            <person name="Johnson C.M."/>
            <person name="Joy A.A."/>
            <person name="Kay M."/>
            <person name="Keenan S.J."/>
            <person name="Kimberley A.M."/>
            <person name="King A."/>
            <person name="Laird G.K."/>
            <person name="Langford C."/>
            <person name="Lawlor S."/>
            <person name="Leongamornlert D.A."/>
            <person name="Leversha M."/>
            <person name="Lloyd C.R."/>
            <person name="Lloyd D.M."/>
            <person name="Loveland J.E."/>
            <person name="Lovell J."/>
            <person name="Martin S."/>
            <person name="Mashreghi-Mohammadi M."/>
            <person name="Maslen G.L."/>
            <person name="Matthews L."/>
            <person name="McCann O.T."/>
            <person name="McLaren S.J."/>
            <person name="McLay K."/>
            <person name="McMurray A."/>
            <person name="Moore M.J.F."/>
            <person name="Mullikin J.C."/>
            <person name="Niblett D."/>
            <person name="Nickerson T."/>
            <person name="Novik K.L."/>
            <person name="Oliver K."/>
            <person name="Overton-Larty E.K."/>
            <person name="Parker A."/>
            <person name="Patel R."/>
            <person name="Pearce A.V."/>
            <person name="Peck A.I."/>
            <person name="Phillimore B.J.C.T."/>
            <person name="Phillips S."/>
            <person name="Plumb R.W."/>
            <person name="Porter K.M."/>
            <person name="Ramsey Y."/>
            <person name="Ranby S.A."/>
            <person name="Rice C.M."/>
            <person name="Ross M.T."/>
            <person name="Searle S.M."/>
            <person name="Sehra H.K."/>
            <person name="Sheridan E."/>
            <person name="Skuce C.D."/>
            <person name="Smith S."/>
            <person name="Smith M."/>
            <person name="Spraggon L."/>
            <person name="Squares S.L."/>
            <person name="Steward C.A."/>
            <person name="Sycamore N."/>
            <person name="Tamlyn-Hall G."/>
            <person name="Tester J."/>
            <person name="Theaker A.J."/>
            <person name="Thomas D.W."/>
            <person name="Thorpe A."/>
            <person name="Tracey A."/>
            <person name="Tromans A."/>
            <person name="Tubby B."/>
            <person name="Wall M."/>
            <person name="Wallis J.M."/>
            <person name="West A.P."/>
            <person name="White S.S."/>
            <person name="Whitehead S.L."/>
            <person name="Whittaker H."/>
            <person name="Wild A."/>
            <person name="Willey D.J."/>
            <person name="Wilmer T.E."/>
            <person name="Wood J.M."/>
            <person name="Wray P.W."/>
            <person name="Wyatt J.C."/>
            <person name="Young L."/>
            <person name="Younger R.M."/>
            <person name="Bentley D.R."/>
            <person name="Coulson A."/>
            <person name="Durbin R.M."/>
            <person name="Hubbard T."/>
            <person name="Sulston J.E."/>
            <person name="Dunham I."/>
            <person name="Rogers J."/>
            <person name="Beck S."/>
        </authorList>
    </citation>
    <scope>NUCLEOTIDE SEQUENCE [LARGE SCALE GENOMIC DNA]</scope>
</reference>
<reference key="5">
    <citation type="submission" date="2005-09" db="EMBL/GenBank/DDBJ databases">
        <authorList>
            <person name="Mural R.J."/>
            <person name="Istrail S."/>
            <person name="Sutton G."/>
            <person name="Florea L."/>
            <person name="Halpern A.L."/>
            <person name="Mobarry C.M."/>
            <person name="Lippert R."/>
            <person name="Walenz B."/>
            <person name="Shatkay H."/>
            <person name="Dew I."/>
            <person name="Miller J.R."/>
            <person name="Flanigan M.J."/>
            <person name="Edwards N.J."/>
            <person name="Bolanos R."/>
            <person name="Fasulo D."/>
            <person name="Halldorsson B.V."/>
            <person name="Hannenhalli S."/>
            <person name="Turner R."/>
            <person name="Yooseph S."/>
            <person name="Lu F."/>
            <person name="Nusskern D.R."/>
            <person name="Shue B.C."/>
            <person name="Zheng X.H."/>
            <person name="Zhong F."/>
            <person name="Delcher A.L."/>
            <person name="Huson D.H."/>
            <person name="Kravitz S.A."/>
            <person name="Mouchard L."/>
            <person name="Reinert K."/>
            <person name="Remington K.A."/>
            <person name="Clark A.G."/>
            <person name="Waterman M.S."/>
            <person name="Eichler E.E."/>
            <person name="Adams M.D."/>
            <person name="Hunkapiller M.W."/>
            <person name="Myers E.W."/>
            <person name="Venter J.C."/>
        </authorList>
    </citation>
    <scope>NUCLEOTIDE SEQUENCE [LARGE SCALE GENOMIC DNA]</scope>
</reference>
<reference key="6">
    <citation type="journal article" date="2004" name="Genome Res.">
        <title>The status, quality, and expansion of the NIH full-length cDNA project: the Mammalian Gene Collection (MGC).</title>
        <authorList>
            <consortium name="The MGC Project Team"/>
        </authorList>
    </citation>
    <scope>NUCLEOTIDE SEQUENCE [LARGE SCALE MRNA] (ISOFORMS 1 AND 2)</scope>
    <source>
        <tissue>Brain</tissue>
        <tissue>Ovary</tissue>
    </source>
</reference>
<reference key="7">
    <citation type="journal article" date="2001" name="J. Biol. Chem.">
        <title>Domain mapping of human PEX5 reveals functional and structural similarities to Saccharomyces cerevisiae Pex18p and Pex21p.</title>
        <authorList>
            <person name="Dodt G."/>
            <person name="Warren D."/>
            <person name="Becker E."/>
            <person name="Rehling P."/>
            <person name="Gould S.J."/>
        </authorList>
    </citation>
    <scope>FUNCTION</scope>
    <scope>SUBCELLULAR LOCATION</scope>
    <scope>INTERACTION WITH PEX5</scope>
</reference>
<reference key="8">
    <citation type="journal article" date="2002" name="Biochem. J.">
        <title>Functional studies on human Pex7p: subcellular localization and interaction with proteins containing a peroxisome-targeting signal type 2 and other peroxins.</title>
        <authorList>
            <person name="Ghys K."/>
            <person name="Fransen M."/>
            <person name="Mannaerts G.P."/>
            <person name="Van Veldhoven P.P."/>
        </authorList>
    </citation>
    <scope>FUNCTION</scope>
    <scope>SUBCELLULAR LOCATION</scope>
</reference>
<reference key="9">
    <citation type="journal article" date="2011" name="J. Biol. Chem.">
        <title>Structural requirements for interaction of peroxisomal targeting signal 2 and its receptor PEX7.</title>
        <authorList>
            <person name="Kunze M."/>
            <person name="Neuberger G."/>
            <person name="Maurer-Stroh S."/>
            <person name="Ma J."/>
            <person name="Eck T."/>
            <person name="Braverman N."/>
            <person name="Schmid J.A."/>
            <person name="Eisenhaber F."/>
            <person name="Berger J."/>
        </authorList>
    </citation>
    <scope>FUNCTION</scope>
    <scope>MUTAGENESIS OF GLU-113; GLU-200 AND GLU-287</scope>
</reference>
<reference key="10">
    <citation type="journal article" date="2015" name="J. Biol. Chem.">
        <title>Mechanistic insights into PTS2-mediated peroxisomal protein import: the co-receptor PEX5L drastically increases the interaction strength between the cargo protein and the receptor PEX7.</title>
        <authorList>
            <person name="Kunze M."/>
            <person name="Malkani N."/>
            <person name="Maurer-Stroh S."/>
            <person name="Wiesinger C."/>
            <person name="Schmid J.A."/>
            <person name="Berger J."/>
        </authorList>
    </citation>
    <scope>FUNCTION</scope>
    <scope>SUBCELLULAR LOCATION</scope>
    <scope>INTERACTION WITH PEX5</scope>
    <scope>MUTAGENESIS OF GLU-113; GLU-200 AND GLU-287</scope>
</reference>
<reference key="11">
    <citation type="journal article" date="2018" name="J. Biochem.">
        <title>A newly isolated Pex7-binding, atypical PTS2 protein P7BP2 is a novel dynein-type AAA+ protein.</title>
        <authorList>
            <person name="Niwa H."/>
            <person name="Miyauchi-Nanri Y."/>
            <person name="Okumoto K."/>
            <person name="Mukai S."/>
            <person name="Noi K."/>
            <person name="Ogura T."/>
            <person name="Fujiki Y."/>
        </authorList>
    </citation>
    <scope>INTERACTION WITH VWA8</scope>
</reference>
<reference key="12">
    <citation type="journal article" date="2021" name="Hum. Genet.">
        <title>A missense allele of PEX5 is responsible for the defective import of PTS2 cargo proteins into peroxisomes.</title>
        <authorList>
            <person name="Ali M."/>
            <person name="Khan S.Y."/>
            <person name="Rodrigues T.A."/>
            <person name="Francisco T."/>
            <person name="Jiao X."/>
            <person name="Qi H."/>
            <person name="Kabir F."/>
            <person name="Irum B."/>
            <person name="Rauf B."/>
            <person name="Khan A.A."/>
            <person name="Mehmood A."/>
            <person name="Naeem M.A."/>
            <person name="Assir M.Z."/>
            <person name="Ali M.H."/>
            <person name="Shahzad M."/>
            <person name="Abu-Amero K.K."/>
            <person name="Akram S.J."/>
            <person name="Akram J."/>
            <person name="Riazuddin S."/>
            <person name="Riazuddin S."/>
            <person name="Robinson M.L."/>
            <person name="Baes M."/>
            <person name="Azevedo J.E."/>
            <person name="Hejtmancik J.F."/>
            <person name="Riazuddin S.A."/>
        </authorList>
    </citation>
    <scope>INTERACTION WITH PEX5</scope>
</reference>
<reference key="13">
    <citation type="journal article" date="2003" name="Am. J. Hum. Genet.">
        <title>Identification of PEX7 as the second gene involved in Refsum disease.</title>
        <authorList>
            <person name="van den Brink D.M."/>
            <person name="Brites P."/>
            <person name="Haasjes J."/>
            <person name="Wierzbicki A.S."/>
            <person name="Mitchell J."/>
            <person name="Lambert-Hamill M."/>
            <person name="de Belleroche J."/>
            <person name="Jansen G.A."/>
            <person name="Waterham H.R."/>
            <person name="Wanders R.J.A."/>
        </authorList>
    </citation>
    <scope>VARIANT PBD9B PRO-14</scope>
</reference>
<gene>
    <name evidence="12 14" type="primary">PEX7</name>
    <name type="synonym">PTS2R</name>
</gene>
<keyword id="KW-0025">Alternative splicing</keyword>
<keyword id="KW-0898">Cataract</keyword>
<keyword id="KW-0963">Cytoplasm</keyword>
<keyword id="KW-0209">Deafness</keyword>
<keyword id="KW-0225">Disease variant</keyword>
<keyword id="KW-0977">Ichthyosis</keyword>
<keyword id="KW-0576">Peroxisome</keyword>
<keyword id="KW-0958">Peroxisome biogenesis disorder</keyword>
<keyword id="KW-0653">Protein transport</keyword>
<keyword id="KW-1267">Proteomics identification</keyword>
<keyword id="KW-1185">Reference proteome</keyword>
<keyword id="KW-0677">Repeat</keyword>
<keyword id="KW-0682">Retinitis pigmentosa</keyword>
<keyword id="KW-0685">Rhizomelic chondrodysplasia punctata</keyword>
<keyword id="KW-0813">Transport</keyword>
<keyword id="KW-0853">WD repeat</keyword>
<proteinExistence type="evidence at protein level"/>
<comment type="function">
    <text evidence="1 2 4 5 8">Receptor required for the peroxisomal import of proteins containing a C-terminal PTS2-type peroxisomal targeting signal (PubMed:11931631, PubMed:22057399, PubMed:25538232, PubMed:9090381). Specifically binds to cargo proteins containing a PTS2 peroxisomal targeting signal in the cytosol (PubMed:11931631, PubMed:22057399, PubMed:25538232). Cargo protein-binding triggers interaction with PEX5 and formation of a ternary complex composed of PEX5 and PEX7 along with PTS2-containing cargo proteins, which is tranlocated into peroxisomes by passing through the PEX13-PEX14 docking complex (PubMed:11546814, PubMed:25538232).</text>
</comment>
<comment type="subunit">
    <text evidence="1 5 6 7">Interacts with PEX5; interaction only takes place when PEX7 is associated with cargo proteins (PubMed:11546814, PubMed:25538232, PubMed:33389129). Interacts with VWA8 (PubMed:30204880).</text>
</comment>
<comment type="interaction">
    <interactant intactId="EBI-5238811">
        <id>O00628</id>
    </interactant>
    <interactant intactId="EBI-7205010">
        <id>P57076</id>
        <label>CFAP298</label>
    </interactant>
    <organismsDiffer>false</organismsDiffer>
    <experiments>3</experiments>
</comment>
<comment type="interaction">
    <interactant intactId="EBI-5238811">
        <id>O00628</id>
    </interactant>
    <interactant intactId="EBI-629434">
        <id>O75925</id>
        <label>PIAS1</label>
    </interactant>
    <organismsDiffer>false</organismsDiffer>
    <experiments>3</experiments>
</comment>
<comment type="interaction">
    <interactant intactId="EBI-25882083">
        <id>O00628-2</id>
    </interactant>
    <interactant intactId="EBI-2410266">
        <id>Q8WXF7</id>
        <label>ATL1</label>
    </interactant>
    <organismsDiffer>false</organismsDiffer>
    <experiments>3</experiments>
</comment>
<comment type="interaction">
    <interactant intactId="EBI-25882083">
        <id>O00628-2</id>
    </interactant>
    <interactant intactId="EBI-10285157">
        <id>Q96EL1</id>
        <label>INKA1</label>
    </interactant>
    <organismsDiffer>false</organismsDiffer>
    <experiments>3</experiments>
</comment>
<comment type="interaction">
    <interactant intactId="EBI-25882083">
        <id>O00628-2</id>
    </interactant>
    <interactant intactId="EBI-11959123">
        <id>Q99932-2</id>
        <label>SPAG8</label>
    </interactant>
    <organismsDiffer>false</organismsDiffer>
    <experiments>3</experiments>
</comment>
<comment type="interaction">
    <interactant intactId="EBI-25882083">
        <id>O00628-2</id>
    </interactant>
    <interactant intactId="EBI-357085">
        <id>Q9UNE7</id>
        <label>STUB1</label>
    </interactant>
    <organismsDiffer>false</organismsDiffer>
    <experiments>3</experiments>
</comment>
<comment type="subcellular location">
    <subcellularLocation>
        <location evidence="2 5">Cytoplasm</location>
        <location evidence="2 5">Cytosol</location>
    </subcellularLocation>
    <subcellularLocation>
        <location evidence="1 2 5">Peroxisome matrix</location>
    </subcellularLocation>
    <text evidence="5">Translocated into the peroxisome matrix together with PTS2-containing cargo proteins and PEX5.</text>
</comment>
<comment type="alternative products">
    <event type="alternative splicing"/>
    <isoform>
        <id>O00628-1</id>
        <name>1</name>
        <sequence type="displayed"/>
    </isoform>
    <isoform>
        <id>O00628-2</id>
        <name>2</name>
        <sequence type="described" ref="VSP_056393"/>
    </isoform>
</comment>
<comment type="tissue specificity">
    <text evidence="8">Ubiquitous (PubMed:9090381). Highest expression in pancreas, skeletal muscle and heart (PubMed:9090381).</text>
</comment>
<comment type="disease">
    <disease id="DI-00920">
        <name>Peroxisome biogenesis disorder complementation group 11</name>
        <acronym>PBD-CG11</acronym>
        <description>A peroxisomal disorder arising from a failure of protein import into the peroxisomal membrane or matrix. The peroxisome biogenesis disorders (PBD group) are genetically heterogeneous with at least 14 distinct genetic groups as concluded from complementation studies. Include disorders are: Zellweger syndrome (ZWS), neonatal adrenoleukodystrophy (NALD), infantile Refsum disease (IRD), and classical rhizomelic chondrodysplasia punctata (RCDP). ZWS, NALD and IRD are distinct from RCDP and constitute a clinical continuum of overlapping phenotypes known as the Zellweger spectrum (PBD-ZSS).</description>
        <dbReference type="MIM" id="614879"/>
    </disease>
    <text>The disease is caused by variants affecting the gene represented in this entry.</text>
</comment>
<comment type="disease" evidence="8 9">
    <disease id="DI-01001">
        <name>Rhizomelic chondrodysplasia punctata 1</name>
        <acronym>RCDP1</acronym>
        <description>A peroxisome biogenesis disorder. It is characterized by severely disturbed endochondral bone formation, rhizomelic shortening of femur and humerus, vertebral disorders, dwarfism, cataract, cutaneous lesions, facial dysmorphism, and severe intellectual disability with spasticity.</description>
        <dbReference type="MIM" id="215100"/>
    </disease>
    <text>The disease is caused by variants affecting the gene represented in this entry.</text>
</comment>
<comment type="disease" evidence="3">
    <disease id="DI-03591">
        <name>Peroxisome biogenesis disorder 9B</name>
        <acronym>PBD9B</acronym>
        <description>A peroxisome biogenesis disorder with unusually mild clinical and biochemical manifestations. Affected individuals manifest a variable phenotype similar to, and in some cases indistinguishable from, classic Refsum disease. Variable features include ocular abnormalities, sensorimotor neuropathy, ichthyosis, deafness, chondrodysplasia punctata without rhizomelia or growth failure.</description>
        <dbReference type="MIM" id="614879"/>
    </disease>
    <text>The disease is caused by variants affecting the gene represented in this entry.</text>
</comment>
<comment type="similarity">
    <text evidence="13">Belongs to the WD repeat peroxin-7 family.</text>
</comment>
<dbReference type="EMBL" id="U88871">
    <property type="protein sequence ID" value="AAC51238.1"/>
    <property type="molecule type" value="mRNA"/>
</dbReference>
<dbReference type="EMBL" id="U76560">
    <property type="protein sequence ID" value="AAB50556.1"/>
    <property type="molecule type" value="mRNA"/>
</dbReference>
<dbReference type="EMBL" id="AF180814">
    <property type="protein sequence ID" value="AAF37350.1"/>
    <property type="molecule type" value="Genomic_DNA"/>
</dbReference>
<dbReference type="EMBL" id="AF180806">
    <property type="protein sequence ID" value="AAF37350.1"/>
    <property type="status" value="JOINED"/>
    <property type="molecule type" value="Genomic_DNA"/>
</dbReference>
<dbReference type="EMBL" id="AF180807">
    <property type="protein sequence ID" value="AAF37350.1"/>
    <property type="status" value="JOINED"/>
    <property type="molecule type" value="Genomic_DNA"/>
</dbReference>
<dbReference type="EMBL" id="AF180808">
    <property type="protein sequence ID" value="AAF37350.1"/>
    <property type="status" value="JOINED"/>
    <property type="molecule type" value="Genomic_DNA"/>
</dbReference>
<dbReference type="EMBL" id="AF180809">
    <property type="protein sequence ID" value="AAF37350.1"/>
    <property type="status" value="JOINED"/>
    <property type="molecule type" value="Genomic_DNA"/>
</dbReference>
<dbReference type="EMBL" id="AF180810">
    <property type="protein sequence ID" value="AAF37350.1"/>
    <property type="status" value="JOINED"/>
    <property type="molecule type" value="Genomic_DNA"/>
</dbReference>
<dbReference type="EMBL" id="AF180811">
    <property type="protein sequence ID" value="AAF37350.1"/>
    <property type="status" value="JOINED"/>
    <property type="molecule type" value="Genomic_DNA"/>
</dbReference>
<dbReference type="EMBL" id="AF180812">
    <property type="protein sequence ID" value="AAF37350.1"/>
    <property type="status" value="JOINED"/>
    <property type="molecule type" value="Genomic_DNA"/>
</dbReference>
<dbReference type="EMBL" id="AF180813">
    <property type="protein sequence ID" value="AAF37350.1"/>
    <property type="status" value="JOINED"/>
    <property type="molecule type" value="Genomic_DNA"/>
</dbReference>
<dbReference type="EMBL" id="AL121933">
    <property type="status" value="NOT_ANNOTATED_CDS"/>
    <property type="molecule type" value="Genomic_DNA"/>
</dbReference>
<dbReference type="EMBL" id="AL357082">
    <property type="status" value="NOT_ANNOTATED_CDS"/>
    <property type="molecule type" value="Genomic_DNA"/>
</dbReference>
<dbReference type="EMBL" id="AL365223">
    <property type="status" value="NOT_ANNOTATED_CDS"/>
    <property type="molecule type" value="Genomic_DNA"/>
</dbReference>
<dbReference type="EMBL" id="CH471051">
    <property type="protein sequence ID" value="EAW47941.1"/>
    <property type="molecule type" value="Genomic_DNA"/>
</dbReference>
<dbReference type="EMBL" id="BC006268">
    <property type="protein sequence ID" value="AAH06268.1"/>
    <property type="molecule type" value="mRNA"/>
</dbReference>
<dbReference type="EMBL" id="BC031606">
    <property type="protein sequence ID" value="AAH31606.1"/>
    <property type="molecule type" value="mRNA"/>
</dbReference>
<dbReference type="CCDS" id="CCDS5180.1">
    <molecule id="O00628-1"/>
</dbReference>
<dbReference type="RefSeq" id="NP_000279.1">
    <molecule id="O00628-1"/>
    <property type="nucleotide sequence ID" value="NM_000288.4"/>
</dbReference>
<dbReference type="SMR" id="O00628"/>
<dbReference type="BioGRID" id="111214">
    <property type="interactions" value="39"/>
</dbReference>
<dbReference type="FunCoup" id="O00628">
    <property type="interactions" value="377"/>
</dbReference>
<dbReference type="IntAct" id="O00628">
    <property type="interactions" value="38"/>
</dbReference>
<dbReference type="MINT" id="O00628"/>
<dbReference type="STRING" id="9606.ENSP00000315680"/>
<dbReference type="TCDB" id="3.A.20.1.1">
    <property type="family name" value="the peroxisomal protein importer (ppi) family"/>
</dbReference>
<dbReference type="iPTMnet" id="O00628"/>
<dbReference type="PhosphoSitePlus" id="O00628"/>
<dbReference type="BioMuta" id="PEX7"/>
<dbReference type="jPOST" id="O00628"/>
<dbReference type="MassIVE" id="O00628"/>
<dbReference type="PaxDb" id="9606-ENSP00000315680"/>
<dbReference type="PeptideAtlas" id="O00628"/>
<dbReference type="ProteomicsDB" id="48001">
    <molecule id="O00628-1"/>
</dbReference>
<dbReference type="ProteomicsDB" id="7570"/>
<dbReference type="Pumba" id="O00628"/>
<dbReference type="ABCD" id="O00628">
    <property type="antibodies" value="1 sequenced antibody"/>
</dbReference>
<dbReference type="Antibodypedia" id="33017">
    <property type="antibodies" value="156 antibodies from 34 providers"/>
</dbReference>
<dbReference type="DNASU" id="5191"/>
<dbReference type="Ensembl" id="ENST00000318471.5">
    <molecule id="O00628-1"/>
    <property type="protein sequence ID" value="ENSP00000315680.3"/>
    <property type="gene ID" value="ENSG00000112357.14"/>
</dbReference>
<dbReference type="Ensembl" id="ENST00000541292.6">
    <molecule id="O00628-2"/>
    <property type="protein sequence ID" value="ENSP00000441004.1"/>
    <property type="gene ID" value="ENSG00000112357.14"/>
</dbReference>
<dbReference type="GeneID" id="5191"/>
<dbReference type="KEGG" id="hsa:5191"/>
<dbReference type="MANE-Select" id="ENST00000318471.5">
    <property type="protein sequence ID" value="ENSP00000315680.3"/>
    <property type="RefSeq nucleotide sequence ID" value="NM_000288.4"/>
    <property type="RefSeq protein sequence ID" value="NP_000279.1"/>
</dbReference>
<dbReference type="UCSC" id="uc063rtk.1">
    <molecule id="O00628-1"/>
    <property type="organism name" value="human"/>
</dbReference>
<dbReference type="AGR" id="HGNC:8860"/>
<dbReference type="CTD" id="5191"/>
<dbReference type="DisGeNET" id="5191"/>
<dbReference type="GeneCards" id="PEX7"/>
<dbReference type="GeneReviews" id="PEX7"/>
<dbReference type="HGNC" id="HGNC:8860">
    <property type="gene designation" value="PEX7"/>
</dbReference>
<dbReference type="HPA" id="ENSG00000112357">
    <property type="expression patterns" value="Low tissue specificity"/>
</dbReference>
<dbReference type="MalaCards" id="PEX7"/>
<dbReference type="MIM" id="215100">
    <property type="type" value="phenotype"/>
</dbReference>
<dbReference type="MIM" id="601757">
    <property type="type" value="gene"/>
</dbReference>
<dbReference type="MIM" id="614879">
    <property type="type" value="phenotype"/>
</dbReference>
<dbReference type="neXtProt" id="NX_O00628"/>
<dbReference type="OpenTargets" id="ENSG00000112357"/>
<dbReference type="Orphanet" id="773">
    <property type="disease" value="Refsum disease"/>
</dbReference>
<dbReference type="Orphanet" id="309789">
    <property type="disease" value="Rhizomelic chondrodysplasia punctata type 1"/>
</dbReference>
<dbReference type="PharmGKB" id="PA33202"/>
<dbReference type="VEuPathDB" id="HostDB:ENSG00000112357"/>
<dbReference type="eggNOG" id="KOG0277">
    <property type="taxonomic scope" value="Eukaryota"/>
</dbReference>
<dbReference type="GeneTree" id="ENSGT00940000157264"/>
<dbReference type="HOGENOM" id="CLU_046581_0_1_1"/>
<dbReference type="InParanoid" id="O00628"/>
<dbReference type="OMA" id="FAVHWNL"/>
<dbReference type="OrthoDB" id="273771at2759"/>
<dbReference type="PAN-GO" id="O00628">
    <property type="GO annotations" value="4 GO annotations based on evolutionary models"/>
</dbReference>
<dbReference type="PhylomeDB" id="O00628"/>
<dbReference type="TreeFam" id="TF323220"/>
<dbReference type="PathwayCommons" id="O00628"/>
<dbReference type="Reactome" id="R-HSA-9033241">
    <property type="pathway name" value="Peroxisomal protein import"/>
</dbReference>
<dbReference type="SignaLink" id="O00628"/>
<dbReference type="SIGNOR" id="O00628"/>
<dbReference type="BioGRID-ORCS" id="5191">
    <property type="hits" value="32 hits in 1163 CRISPR screens"/>
</dbReference>
<dbReference type="CD-CODE" id="91857CE7">
    <property type="entry name" value="Nucleolus"/>
</dbReference>
<dbReference type="ChiTaRS" id="PEX7">
    <property type="organism name" value="human"/>
</dbReference>
<dbReference type="GenomeRNAi" id="5191"/>
<dbReference type="Pharos" id="O00628">
    <property type="development level" value="Tbio"/>
</dbReference>
<dbReference type="PRO" id="PR:O00628"/>
<dbReference type="Proteomes" id="UP000005640">
    <property type="component" value="Chromosome 6"/>
</dbReference>
<dbReference type="RNAct" id="O00628">
    <property type="molecule type" value="protein"/>
</dbReference>
<dbReference type="Bgee" id="ENSG00000112357">
    <property type="expression patterns" value="Expressed in pigmented layer of retina and 189 other cell types or tissues"/>
</dbReference>
<dbReference type="ExpressionAtlas" id="O00628">
    <property type="expression patterns" value="baseline and differential"/>
</dbReference>
<dbReference type="GO" id="GO:0005829">
    <property type="term" value="C:cytosol"/>
    <property type="evidence" value="ECO:0000314"/>
    <property type="project" value="UniProtKB"/>
</dbReference>
<dbReference type="GO" id="GO:0005782">
    <property type="term" value="C:peroxisomal matrix"/>
    <property type="evidence" value="ECO:0000314"/>
    <property type="project" value="UniProtKB"/>
</dbReference>
<dbReference type="GO" id="GO:0005778">
    <property type="term" value="C:peroxisomal membrane"/>
    <property type="evidence" value="ECO:0000304"/>
    <property type="project" value="Reactome"/>
</dbReference>
<dbReference type="GO" id="GO:0005777">
    <property type="term" value="C:peroxisome"/>
    <property type="evidence" value="ECO:0000314"/>
    <property type="project" value="UniProtKB"/>
</dbReference>
<dbReference type="GO" id="GO:0019899">
    <property type="term" value="F:enzyme binding"/>
    <property type="evidence" value="ECO:0000353"/>
    <property type="project" value="UniProtKB"/>
</dbReference>
<dbReference type="GO" id="GO:0005053">
    <property type="term" value="F:peroxisome matrix targeting signal-2 binding"/>
    <property type="evidence" value="ECO:0000314"/>
    <property type="project" value="UniProtKB"/>
</dbReference>
<dbReference type="GO" id="GO:0042803">
    <property type="term" value="F:protein homodimerization activity"/>
    <property type="evidence" value="ECO:0000314"/>
    <property type="project" value="UniProtKB"/>
</dbReference>
<dbReference type="GO" id="GO:0001958">
    <property type="term" value="P:endochondral ossification"/>
    <property type="evidence" value="ECO:0007669"/>
    <property type="project" value="Ensembl"/>
</dbReference>
<dbReference type="GO" id="GO:0008611">
    <property type="term" value="P:ether lipid biosynthetic process"/>
    <property type="evidence" value="ECO:0000315"/>
    <property type="project" value="UniProtKB"/>
</dbReference>
<dbReference type="GO" id="GO:0006635">
    <property type="term" value="P:fatty acid beta-oxidation"/>
    <property type="evidence" value="ECO:0007669"/>
    <property type="project" value="Ensembl"/>
</dbReference>
<dbReference type="GO" id="GO:0001764">
    <property type="term" value="P:neuron migration"/>
    <property type="evidence" value="ECO:0007669"/>
    <property type="project" value="Ensembl"/>
</dbReference>
<dbReference type="GO" id="GO:0007031">
    <property type="term" value="P:peroxisome organization"/>
    <property type="evidence" value="ECO:0000315"/>
    <property type="project" value="UniProtKB"/>
</dbReference>
<dbReference type="GO" id="GO:0016558">
    <property type="term" value="P:protein import into peroxisome matrix"/>
    <property type="evidence" value="ECO:0000314"/>
    <property type="project" value="UniProtKB"/>
</dbReference>
<dbReference type="GO" id="GO:0006625">
    <property type="term" value="P:protein targeting to peroxisome"/>
    <property type="evidence" value="ECO:0007669"/>
    <property type="project" value="Ensembl"/>
</dbReference>
<dbReference type="CDD" id="cd00200">
    <property type="entry name" value="WD40"/>
    <property type="match status" value="1"/>
</dbReference>
<dbReference type="FunFam" id="2.130.10.10:FF:000372">
    <property type="entry name" value="Peroxisomal biogenesis factor 7"/>
    <property type="match status" value="1"/>
</dbReference>
<dbReference type="Gene3D" id="2.130.10.10">
    <property type="entry name" value="YVTN repeat-like/Quinoprotein amine dehydrogenase"/>
    <property type="match status" value="1"/>
</dbReference>
<dbReference type="InterPro" id="IPR020472">
    <property type="entry name" value="G-protein_beta_WD-40_rep"/>
</dbReference>
<dbReference type="InterPro" id="IPR044536">
    <property type="entry name" value="PEX7"/>
</dbReference>
<dbReference type="InterPro" id="IPR015943">
    <property type="entry name" value="WD40/YVTN_repeat-like_dom_sf"/>
</dbReference>
<dbReference type="InterPro" id="IPR019775">
    <property type="entry name" value="WD40_repeat_CS"/>
</dbReference>
<dbReference type="InterPro" id="IPR036322">
    <property type="entry name" value="WD40_repeat_dom_sf"/>
</dbReference>
<dbReference type="InterPro" id="IPR001680">
    <property type="entry name" value="WD40_rpt"/>
</dbReference>
<dbReference type="PANTHER" id="PTHR46027">
    <property type="entry name" value="PEROXISOMAL TARGETING SIGNAL 2 RECEPTOR"/>
    <property type="match status" value="1"/>
</dbReference>
<dbReference type="PANTHER" id="PTHR46027:SF1">
    <property type="entry name" value="PEROXISOMAL TARGETING SIGNAL 2 RECEPTOR"/>
    <property type="match status" value="1"/>
</dbReference>
<dbReference type="Pfam" id="PF00400">
    <property type="entry name" value="WD40"/>
    <property type="match status" value="5"/>
</dbReference>
<dbReference type="PRINTS" id="PR00320">
    <property type="entry name" value="GPROTEINBRPT"/>
</dbReference>
<dbReference type="SMART" id="SM00320">
    <property type="entry name" value="WD40"/>
    <property type="match status" value="6"/>
</dbReference>
<dbReference type="SUPFAM" id="SSF50978">
    <property type="entry name" value="WD40 repeat-like"/>
    <property type="match status" value="1"/>
</dbReference>
<dbReference type="PROSITE" id="PS00678">
    <property type="entry name" value="WD_REPEATS_1"/>
    <property type="match status" value="3"/>
</dbReference>
<dbReference type="PROSITE" id="PS50082">
    <property type="entry name" value="WD_REPEATS_2"/>
    <property type="match status" value="4"/>
</dbReference>
<dbReference type="PROSITE" id="PS50294">
    <property type="entry name" value="WD_REPEATS_REGION"/>
    <property type="match status" value="1"/>
</dbReference>
<evidence type="ECO:0000269" key="1">
    <source>
    </source>
</evidence>
<evidence type="ECO:0000269" key="2">
    <source>
    </source>
</evidence>
<evidence type="ECO:0000269" key="3">
    <source>
    </source>
</evidence>
<evidence type="ECO:0000269" key="4">
    <source>
    </source>
</evidence>
<evidence type="ECO:0000269" key="5">
    <source>
    </source>
</evidence>
<evidence type="ECO:0000269" key="6">
    <source>
    </source>
</evidence>
<evidence type="ECO:0000269" key="7">
    <source>
    </source>
</evidence>
<evidence type="ECO:0000269" key="8">
    <source>
    </source>
</evidence>
<evidence type="ECO:0000269" key="9">
    <source>
    </source>
</evidence>
<evidence type="ECO:0000303" key="10">
    <source>
    </source>
</evidence>
<evidence type="ECO:0000303" key="11">
    <source>
    </source>
</evidence>
<evidence type="ECO:0000303" key="12">
    <source>
    </source>
</evidence>
<evidence type="ECO:0000305" key="13"/>
<evidence type="ECO:0000312" key="14">
    <source>
        <dbReference type="HGNC" id="HGNC:8860"/>
    </source>
</evidence>
<protein>
    <recommendedName>
        <fullName evidence="13">Peroxisomal targeting signal 2 receptor</fullName>
        <shortName evidence="11">PTS2 receptor</shortName>
    </recommendedName>
    <alternativeName>
        <fullName evidence="13">Peroxin-7</fullName>
    </alternativeName>
</protein>